<reference key="1">
    <citation type="journal article" date="2006" name="Gene">
        <title>Adaptive selection of mitochondrial complex I subunits during primate radiation.</title>
        <authorList>
            <person name="Mishmar D."/>
            <person name="Ruiz-Pesini E."/>
            <person name="Mondragon-Palomino M."/>
            <person name="Procaccio V."/>
            <person name="Gaut B."/>
            <person name="Wallace D.C."/>
        </authorList>
    </citation>
    <scope>NUCLEOTIDE SEQUENCE [MRNA]</scope>
</reference>
<sequence>MIARRNPEPLRFLPDEARSLPPPKLTDPRLLYIGFLGYCSGLIDNLIRRRPVATAGLHRQLLYITAFFFAGYYLVKREDYLYAVRDREMFGYMKLHPEDFPEEDKKTYGEIFEKFHPIR</sequence>
<accession>Q0MQF9</accession>
<keyword id="KW-0249">Electron transport</keyword>
<keyword id="KW-0472">Membrane</keyword>
<keyword id="KW-0496">Mitochondrion</keyword>
<keyword id="KW-0999">Mitochondrion inner membrane</keyword>
<keyword id="KW-1185">Reference proteome</keyword>
<keyword id="KW-0679">Respiratory chain</keyword>
<keyword id="KW-0812">Transmembrane</keyword>
<keyword id="KW-1133">Transmembrane helix</keyword>
<keyword id="KW-0813">Transport</keyword>
<protein>
    <recommendedName>
        <fullName evidence="1">NADH dehydrogenase [ubiquinone] 1 subunit C2</fullName>
    </recommendedName>
    <alternativeName>
        <fullName>Complex I-B14.5b</fullName>
        <shortName>CI-B14.5b</shortName>
    </alternativeName>
    <alternativeName>
        <fullName>NADH-ubiquinone oxidoreductase subunit B14.5b</fullName>
    </alternativeName>
</protein>
<comment type="function">
    <text evidence="1">Accessory subunit of the mitochondrial membrane respiratory chain NADH dehydrogenase (Complex I), that is believed not to be involved in catalysis but required for the complex assembly. Complex I functions in the transfer of electrons from NADH to the respiratory chain. The immediate electron acceptor for the enzyme is believed to be ubiquinone.</text>
</comment>
<comment type="subunit">
    <text evidence="1">Complex I is composed of 45 different subunits. Interacts with TMEM242 (By similarity).</text>
</comment>
<comment type="subcellular location">
    <subcellularLocation>
        <location evidence="1">Mitochondrion inner membrane</location>
        <topology evidence="2">Single-pass membrane protein</topology>
        <orientation evidence="1">Matrix side</orientation>
    </subcellularLocation>
</comment>
<comment type="similarity">
    <text evidence="3">Belongs to the complex I NDUFC2 subunit family.</text>
</comment>
<evidence type="ECO:0000250" key="1">
    <source>
        <dbReference type="UniProtKB" id="O95298"/>
    </source>
</evidence>
<evidence type="ECO:0000255" key="2"/>
<evidence type="ECO:0000305" key="3"/>
<name>NDUC2_PANTR</name>
<dbReference type="EMBL" id="DQ885675">
    <property type="protein sequence ID" value="ABH12184.1"/>
    <property type="molecule type" value="mRNA"/>
</dbReference>
<dbReference type="RefSeq" id="NP_001065249.1">
    <property type="nucleotide sequence ID" value="NM_001071781.1"/>
</dbReference>
<dbReference type="SMR" id="Q0MQF9"/>
<dbReference type="FunCoup" id="Q0MQF9">
    <property type="interactions" value="1488"/>
</dbReference>
<dbReference type="STRING" id="9598.ENSPTRP00000071349"/>
<dbReference type="PaxDb" id="9598-ENSPTRP00000007076"/>
<dbReference type="Ensembl" id="ENSPTRT00000104996.1">
    <property type="protein sequence ID" value="ENSPTRP00000081327.1"/>
    <property type="gene ID" value="ENSPTRG00000047123.1"/>
</dbReference>
<dbReference type="GeneID" id="451445"/>
<dbReference type="KEGG" id="ptr:451445"/>
<dbReference type="CTD" id="4718"/>
<dbReference type="eggNOG" id="KOG4516">
    <property type="taxonomic scope" value="Eukaryota"/>
</dbReference>
<dbReference type="GeneTree" id="ENSGT00390000010352"/>
<dbReference type="HOGENOM" id="CLU_156652_0_0_1"/>
<dbReference type="InParanoid" id="Q0MQF9"/>
<dbReference type="OMA" id="WFIGYHI"/>
<dbReference type="OrthoDB" id="2157at9604"/>
<dbReference type="TreeFam" id="TF314723"/>
<dbReference type="Proteomes" id="UP000002277">
    <property type="component" value="Chromosome 11"/>
</dbReference>
<dbReference type="Bgee" id="ENSPTRG00000047123">
    <property type="expression patterns" value="Expressed in cerebellar cortex and 21 other cell types or tissues"/>
</dbReference>
<dbReference type="GO" id="GO:0005743">
    <property type="term" value="C:mitochondrial inner membrane"/>
    <property type="evidence" value="ECO:0007669"/>
    <property type="project" value="UniProtKB-SubCell"/>
</dbReference>
<dbReference type="GO" id="GO:0045271">
    <property type="term" value="C:respiratory chain complex I"/>
    <property type="evidence" value="ECO:0000250"/>
    <property type="project" value="UniProtKB"/>
</dbReference>
<dbReference type="GO" id="GO:0006120">
    <property type="term" value="P:mitochondrial electron transport, NADH to ubiquinone"/>
    <property type="evidence" value="ECO:0007669"/>
    <property type="project" value="InterPro"/>
</dbReference>
<dbReference type="InterPro" id="IPR009423">
    <property type="entry name" value="NDUC2"/>
</dbReference>
<dbReference type="PANTHER" id="PTHR13099:SF0">
    <property type="entry name" value="NADH DEHYDROGENASE [UBIQUINONE] 1 SUBUNIT C2-RELATED"/>
    <property type="match status" value="1"/>
</dbReference>
<dbReference type="PANTHER" id="PTHR13099">
    <property type="entry name" value="NADH-UBIQUINONE OXIDOREDUCTASE SUBUNIT B14.5B"/>
    <property type="match status" value="1"/>
</dbReference>
<dbReference type="Pfam" id="PF06374">
    <property type="entry name" value="NDUF_C2"/>
    <property type="match status" value="1"/>
</dbReference>
<dbReference type="PIRSF" id="PIRSF017834">
    <property type="entry name" value="NADH-UbQ_OxRdtase_b14.5b"/>
    <property type="match status" value="1"/>
</dbReference>
<organism>
    <name type="scientific">Pan troglodytes</name>
    <name type="common">Chimpanzee</name>
    <dbReference type="NCBI Taxonomy" id="9598"/>
    <lineage>
        <taxon>Eukaryota</taxon>
        <taxon>Metazoa</taxon>
        <taxon>Chordata</taxon>
        <taxon>Craniata</taxon>
        <taxon>Vertebrata</taxon>
        <taxon>Euteleostomi</taxon>
        <taxon>Mammalia</taxon>
        <taxon>Eutheria</taxon>
        <taxon>Euarchontoglires</taxon>
        <taxon>Primates</taxon>
        <taxon>Haplorrhini</taxon>
        <taxon>Catarrhini</taxon>
        <taxon>Hominidae</taxon>
        <taxon>Pan</taxon>
    </lineage>
</organism>
<gene>
    <name evidence="1" type="primary">NDUFC2</name>
</gene>
<feature type="chain" id="PRO_0000251851" description="NADH dehydrogenase [ubiquinone] 1 subunit C2">
    <location>
        <begin position="1"/>
        <end position="119"/>
    </location>
</feature>
<feature type="transmembrane region" description="Helical" evidence="2">
    <location>
        <begin position="56"/>
        <end position="75"/>
    </location>
</feature>
<proteinExistence type="inferred from homology"/>